<keyword id="KW-1185">Reference proteome</keyword>
<evidence type="ECO:0000255" key="1">
    <source>
        <dbReference type="HAMAP-Rule" id="MF_01187"/>
    </source>
</evidence>
<sequence length="59" mass="6536">MAFDKKLLDIVACPVCKGKLEYDKTTQQLICKADKLAYPITEGIPVLLENRAVPLTESV</sequence>
<accession>A3D383</accession>
<organism>
    <name type="scientific">Shewanella baltica (strain OS155 / ATCC BAA-1091)</name>
    <dbReference type="NCBI Taxonomy" id="325240"/>
    <lineage>
        <taxon>Bacteria</taxon>
        <taxon>Pseudomonadati</taxon>
        <taxon>Pseudomonadota</taxon>
        <taxon>Gammaproteobacteria</taxon>
        <taxon>Alteromonadales</taxon>
        <taxon>Shewanellaceae</taxon>
        <taxon>Shewanella</taxon>
    </lineage>
</organism>
<gene>
    <name type="ordered locus">Sbal_1685</name>
</gene>
<comment type="similarity">
    <text evidence="1">Belongs to the UPF0434 family.</text>
</comment>
<proteinExistence type="inferred from homology"/>
<dbReference type="EMBL" id="CP000563">
    <property type="protein sequence ID" value="ABN61196.1"/>
    <property type="molecule type" value="Genomic_DNA"/>
</dbReference>
<dbReference type="RefSeq" id="WP_006081200.1">
    <property type="nucleotide sequence ID" value="NC_009052.1"/>
</dbReference>
<dbReference type="SMR" id="A3D383"/>
<dbReference type="STRING" id="325240.Sbal_1685"/>
<dbReference type="KEGG" id="sbl:Sbal_1685"/>
<dbReference type="HOGENOM" id="CLU_155659_3_1_6"/>
<dbReference type="OrthoDB" id="9812205at2"/>
<dbReference type="Proteomes" id="UP000001557">
    <property type="component" value="Chromosome"/>
</dbReference>
<dbReference type="GO" id="GO:0005829">
    <property type="term" value="C:cytosol"/>
    <property type="evidence" value="ECO:0007669"/>
    <property type="project" value="TreeGrafter"/>
</dbReference>
<dbReference type="FunFam" id="2.20.25.10:FF:000002">
    <property type="entry name" value="UPF0434 protein YcaR"/>
    <property type="match status" value="1"/>
</dbReference>
<dbReference type="Gene3D" id="2.20.25.10">
    <property type="match status" value="1"/>
</dbReference>
<dbReference type="HAMAP" id="MF_01187">
    <property type="entry name" value="UPF0434"/>
    <property type="match status" value="1"/>
</dbReference>
<dbReference type="InterPro" id="IPR005651">
    <property type="entry name" value="Trm112-like"/>
</dbReference>
<dbReference type="PANTHER" id="PTHR33505:SF4">
    <property type="entry name" value="PROTEIN PREY, MITOCHONDRIAL"/>
    <property type="match status" value="1"/>
</dbReference>
<dbReference type="PANTHER" id="PTHR33505">
    <property type="entry name" value="ZGC:162634"/>
    <property type="match status" value="1"/>
</dbReference>
<dbReference type="Pfam" id="PF03966">
    <property type="entry name" value="Trm112p"/>
    <property type="match status" value="1"/>
</dbReference>
<dbReference type="SUPFAM" id="SSF158997">
    <property type="entry name" value="Trm112p-like"/>
    <property type="match status" value="1"/>
</dbReference>
<feature type="chain" id="PRO_1000065854" description="UPF0434 protein Sbal_1685">
    <location>
        <begin position="1"/>
        <end position="59"/>
    </location>
</feature>
<name>Y1685_SHEB5</name>
<reference key="1">
    <citation type="submission" date="2007-02" db="EMBL/GenBank/DDBJ databases">
        <title>Complete sequence of chromosome of Shewanella baltica OS155.</title>
        <authorList>
            <consortium name="US DOE Joint Genome Institute"/>
            <person name="Copeland A."/>
            <person name="Lucas S."/>
            <person name="Lapidus A."/>
            <person name="Barry K."/>
            <person name="Detter J.C."/>
            <person name="Glavina del Rio T."/>
            <person name="Hammon N."/>
            <person name="Israni S."/>
            <person name="Dalin E."/>
            <person name="Tice H."/>
            <person name="Pitluck S."/>
            <person name="Sims D.R."/>
            <person name="Brettin T."/>
            <person name="Bruce D."/>
            <person name="Han C."/>
            <person name="Tapia R."/>
            <person name="Brainard J."/>
            <person name="Schmutz J."/>
            <person name="Larimer F."/>
            <person name="Land M."/>
            <person name="Hauser L."/>
            <person name="Kyrpides N."/>
            <person name="Mikhailova N."/>
            <person name="Brettar I."/>
            <person name="Klappenbach J."/>
            <person name="Konstantinidis K."/>
            <person name="Rodrigues J."/>
            <person name="Tiedje J."/>
            <person name="Richardson P."/>
        </authorList>
    </citation>
    <scope>NUCLEOTIDE SEQUENCE [LARGE SCALE GENOMIC DNA]</scope>
    <source>
        <strain>OS155 / ATCC BAA-1091</strain>
    </source>
</reference>
<protein>
    <recommendedName>
        <fullName evidence="1">UPF0434 protein Sbal_1685</fullName>
    </recommendedName>
</protein>